<organism>
    <name type="scientific">Clostridium perfringens (strain 13 / Type A)</name>
    <dbReference type="NCBI Taxonomy" id="195102"/>
    <lineage>
        <taxon>Bacteria</taxon>
        <taxon>Bacillati</taxon>
        <taxon>Bacillota</taxon>
        <taxon>Clostridia</taxon>
        <taxon>Eubacteriales</taxon>
        <taxon>Clostridiaceae</taxon>
        <taxon>Clostridium</taxon>
    </lineage>
</organism>
<name>GLSA2_CLOPE</name>
<sequence length="305" mass="33691">MKNFLESLIENNRQYVEHGKLASYIPELEKANKEDLGIYIVTLDGKEVGAGEYDKKFTIQSISKVITLMLAILDNGKDRVFSRVGVEPTGDSFNSIVSLERKPSKKPFNPMVNSGAILTTSLIEGDSEEEKFERILEFTRKVTGNDDIQLNEDVYLSEKETGDRNRALAYFMKSNGVIEGNIDDILDLYFKQCSLEVNAKDLARFGAMLANDGVLPWNGERVISREICRIIKTIMVTCGMYDDSGKFAVHIGIPAKSGVGGGIMAAVPRRMGIGIFGPSLDDKGNSIAGTHVMKDLSEELDLSIF</sequence>
<evidence type="ECO:0000255" key="1">
    <source>
        <dbReference type="HAMAP-Rule" id="MF_00313"/>
    </source>
</evidence>
<proteinExistence type="inferred from homology"/>
<accession>Q8XIW8</accession>
<protein>
    <recommendedName>
        <fullName evidence="1">Glutaminase 2</fullName>
        <ecNumber evidence="1">3.5.1.2</ecNumber>
    </recommendedName>
</protein>
<dbReference type="EC" id="3.5.1.2" evidence="1"/>
<dbReference type="EMBL" id="BA000016">
    <property type="protein sequence ID" value="BAB81701.1"/>
    <property type="molecule type" value="Genomic_DNA"/>
</dbReference>
<dbReference type="SMR" id="Q8XIW8"/>
<dbReference type="STRING" id="195102.gene:10491265"/>
<dbReference type="KEGG" id="cpe:CPE1995"/>
<dbReference type="HOGENOM" id="CLU_027932_1_0_9"/>
<dbReference type="Proteomes" id="UP000000818">
    <property type="component" value="Chromosome"/>
</dbReference>
<dbReference type="GO" id="GO:0004359">
    <property type="term" value="F:glutaminase activity"/>
    <property type="evidence" value="ECO:0007669"/>
    <property type="project" value="UniProtKB-UniRule"/>
</dbReference>
<dbReference type="GO" id="GO:0006537">
    <property type="term" value="P:glutamate biosynthetic process"/>
    <property type="evidence" value="ECO:0007669"/>
    <property type="project" value="TreeGrafter"/>
</dbReference>
<dbReference type="GO" id="GO:0006543">
    <property type="term" value="P:glutamine catabolic process"/>
    <property type="evidence" value="ECO:0007669"/>
    <property type="project" value="TreeGrafter"/>
</dbReference>
<dbReference type="FunFam" id="3.40.710.10:FF:000005">
    <property type="entry name" value="Glutaminase"/>
    <property type="match status" value="1"/>
</dbReference>
<dbReference type="Gene3D" id="3.40.710.10">
    <property type="entry name" value="DD-peptidase/beta-lactamase superfamily"/>
    <property type="match status" value="1"/>
</dbReference>
<dbReference type="HAMAP" id="MF_00313">
    <property type="entry name" value="Glutaminase"/>
    <property type="match status" value="1"/>
</dbReference>
<dbReference type="InterPro" id="IPR012338">
    <property type="entry name" value="Beta-lactam/transpept-like"/>
</dbReference>
<dbReference type="InterPro" id="IPR015868">
    <property type="entry name" value="Glutaminase"/>
</dbReference>
<dbReference type="NCBIfam" id="TIGR03814">
    <property type="entry name" value="Gln_ase"/>
    <property type="match status" value="1"/>
</dbReference>
<dbReference type="PANTHER" id="PTHR12544">
    <property type="entry name" value="GLUTAMINASE"/>
    <property type="match status" value="1"/>
</dbReference>
<dbReference type="PANTHER" id="PTHR12544:SF29">
    <property type="entry name" value="GLUTAMINASE"/>
    <property type="match status" value="1"/>
</dbReference>
<dbReference type="Pfam" id="PF04960">
    <property type="entry name" value="Glutaminase"/>
    <property type="match status" value="1"/>
</dbReference>
<dbReference type="SUPFAM" id="SSF56601">
    <property type="entry name" value="beta-lactamase/transpeptidase-like"/>
    <property type="match status" value="1"/>
</dbReference>
<feature type="chain" id="PRO_0000110603" description="Glutaminase 2">
    <location>
        <begin position="1"/>
        <end position="305"/>
    </location>
</feature>
<feature type="binding site" evidence="1">
    <location>
        <position position="61"/>
    </location>
    <ligand>
        <name>substrate</name>
    </ligand>
</feature>
<feature type="binding site" evidence="1">
    <location>
        <position position="113"/>
    </location>
    <ligand>
        <name>substrate</name>
    </ligand>
</feature>
<feature type="binding site" evidence="1">
    <location>
        <position position="158"/>
    </location>
    <ligand>
        <name>substrate</name>
    </ligand>
</feature>
<feature type="binding site" evidence="1">
    <location>
        <position position="165"/>
    </location>
    <ligand>
        <name>substrate</name>
    </ligand>
</feature>
<feature type="binding site" evidence="1">
    <location>
        <position position="189"/>
    </location>
    <ligand>
        <name>substrate</name>
    </ligand>
</feature>
<feature type="binding site" evidence="1">
    <location>
        <position position="241"/>
    </location>
    <ligand>
        <name>substrate</name>
    </ligand>
</feature>
<feature type="binding site" evidence="1">
    <location>
        <position position="259"/>
    </location>
    <ligand>
        <name>substrate</name>
    </ligand>
</feature>
<reference key="1">
    <citation type="journal article" date="2002" name="Proc. Natl. Acad. Sci. U.S.A.">
        <title>Complete genome sequence of Clostridium perfringens, an anaerobic flesh-eater.</title>
        <authorList>
            <person name="Shimizu T."/>
            <person name="Ohtani K."/>
            <person name="Hirakawa H."/>
            <person name="Ohshima K."/>
            <person name="Yamashita A."/>
            <person name="Shiba T."/>
            <person name="Ogasawara N."/>
            <person name="Hattori M."/>
            <person name="Kuhara S."/>
            <person name="Hayashi H."/>
        </authorList>
    </citation>
    <scope>NUCLEOTIDE SEQUENCE [LARGE SCALE GENOMIC DNA]</scope>
    <source>
        <strain>13 / Type A</strain>
    </source>
</reference>
<keyword id="KW-0378">Hydrolase</keyword>
<keyword id="KW-1185">Reference proteome</keyword>
<comment type="catalytic activity">
    <reaction evidence="1">
        <text>L-glutamine + H2O = L-glutamate + NH4(+)</text>
        <dbReference type="Rhea" id="RHEA:15889"/>
        <dbReference type="ChEBI" id="CHEBI:15377"/>
        <dbReference type="ChEBI" id="CHEBI:28938"/>
        <dbReference type="ChEBI" id="CHEBI:29985"/>
        <dbReference type="ChEBI" id="CHEBI:58359"/>
        <dbReference type="EC" id="3.5.1.2"/>
    </reaction>
</comment>
<comment type="subunit">
    <text evidence="1">Homotetramer.</text>
</comment>
<comment type="similarity">
    <text evidence="1">Belongs to the glutaminase family.</text>
</comment>
<gene>
    <name evidence="1" type="primary">glsA2</name>
    <name type="ordered locus">CPE1995</name>
</gene>